<keyword id="KW-1003">Cell membrane</keyword>
<keyword id="KW-0325">Glycoprotein</keyword>
<keyword id="KW-0472">Membrane</keyword>
<keyword id="KW-1185">Reference proteome</keyword>
<keyword id="KW-0812">Transmembrane</keyword>
<keyword id="KW-1133">Transmembrane helix</keyword>
<accession>B4HNS1</accession>
<reference evidence="4" key="1">
    <citation type="journal article" date="2007" name="Nature">
        <title>Evolution of genes and genomes on the Drosophila phylogeny.</title>
        <authorList>
            <consortium name="Drosophila 12 genomes consortium"/>
        </authorList>
    </citation>
    <scope>NUCLEOTIDE SEQUENCE [LARGE SCALE GENOMIC DNA]</scope>
    <source>
        <strain evidence="4">Rob3c / Tucson 14021-0248.25</strain>
    </source>
</reference>
<name>TRE12_DROSE</name>
<gene>
    <name evidence="2" type="primary">Tret1-2</name>
    <name type="ORF">GM21299</name>
</gene>
<feature type="chain" id="PRO_0000395535" description="Facilitated trehalose transporter Tret1-2 homolog">
    <location>
        <begin position="1"/>
        <end position="488"/>
    </location>
</feature>
<feature type="topological domain" description="Cytoplasmic" evidence="3">
    <location>
        <begin position="1"/>
        <end position="28"/>
    </location>
</feature>
<feature type="transmembrane region" description="Helical; Name=1" evidence="3">
    <location>
        <begin position="29"/>
        <end position="49"/>
    </location>
</feature>
<feature type="topological domain" description="Extracellular" evidence="3">
    <location>
        <begin position="50"/>
        <end position="72"/>
    </location>
</feature>
<feature type="transmembrane region" description="Helical; Name=2" evidence="3">
    <location>
        <begin position="73"/>
        <end position="93"/>
    </location>
</feature>
<feature type="topological domain" description="Cytoplasmic" evidence="3">
    <location>
        <begin position="94"/>
        <end position="105"/>
    </location>
</feature>
<feature type="transmembrane region" description="Helical; Name=3" evidence="3">
    <location>
        <begin position="106"/>
        <end position="126"/>
    </location>
</feature>
<feature type="topological domain" description="Extracellular" evidence="3">
    <location>
        <begin position="127"/>
        <end position="129"/>
    </location>
</feature>
<feature type="transmembrane region" description="Helical; Name=4" evidence="3">
    <location>
        <begin position="130"/>
        <end position="150"/>
    </location>
</feature>
<feature type="topological domain" description="Cytoplasmic" evidence="3">
    <location>
        <begin position="151"/>
        <end position="160"/>
    </location>
</feature>
<feature type="transmembrane region" description="Helical; Name=5" evidence="3">
    <location>
        <begin position="161"/>
        <end position="181"/>
    </location>
</feature>
<feature type="topological domain" description="Extracellular" evidence="3">
    <location>
        <begin position="182"/>
        <end position="184"/>
    </location>
</feature>
<feature type="transmembrane region" description="Helical; Name=6" evidence="3">
    <location>
        <begin position="185"/>
        <end position="205"/>
    </location>
</feature>
<feature type="topological domain" description="Cytoplasmic" evidence="3">
    <location>
        <begin position="206"/>
        <end position="268"/>
    </location>
</feature>
<feature type="transmembrane region" description="Helical; Name=7" evidence="3">
    <location>
        <begin position="269"/>
        <end position="289"/>
    </location>
</feature>
<feature type="topological domain" description="Extracellular" evidence="3">
    <location>
        <begin position="290"/>
        <end position="305"/>
    </location>
</feature>
<feature type="transmembrane region" description="Helical; Name=8" evidence="3">
    <location>
        <begin position="306"/>
        <end position="326"/>
    </location>
</feature>
<feature type="topological domain" description="Cytoplasmic" evidence="3">
    <location>
        <begin position="327"/>
        <end position="332"/>
    </location>
</feature>
<feature type="transmembrane region" description="Helical; Name=9" evidence="3">
    <location>
        <begin position="333"/>
        <end position="353"/>
    </location>
</feature>
<feature type="topological domain" description="Extracellular" evidence="3">
    <location>
        <begin position="354"/>
        <end position="372"/>
    </location>
</feature>
<feature type="transmembrane region" description="Helical; Name=10" evidence="3">
    <location>
        <begin position="373"/>
        <end position="393"/>
    </location>
</feature>
<feature type="topological domain" description="Cytoplasmic" evidence="3">
    <location>
        <begin position="394"/>
        <end position="402"/>
    </location>
</feature>
<feature type="transmembrane region" description="Helical; Name=11" evidence="3">
    <location>
        <begin position="403"/>
        <end position="423"/>
    </location>
</feature>
<feature type="topological domain" description="Extracellular" evidence="3">
    <location>
        <begin position="424"/>
        <end position="433"/>
    </location>
</feature>
<feature type="transmembrane region" description="Helical; Name=12" evidence="3">
    <location>
        <begin position="434"/>
        <end position="454"/>
    </location>
</feature>
<feature type="topological domain" description="Cytoplasmic" evidence="3">
    <location>
        <begin position="455"/>
        <end position="488"/>
    </location>
</feature>
<feature type="glycosylation site" description="N-linked (GlcNAc...) asparagine" evidence="3">
    <location>
        <position position="182"/>
    </location>
</feature>
<protein>
    <recommendedName>
        <fullName evidence="2">Facilitated trehalose transporter Tret1-2 homolog</fullName>
    </recommendedName>
</protein>
<dbReference type="EMBL" id="CH480816">
    <property type="protein sequence ID" value="EDW47436.1"/>
    <property type="molecule type" value="Genomic_DNA"/>
</dbReference>
<dbReference type="SMR" id="B4HNS1"/>
<dbReference type="STRING" id="7238.B4HNS1"/>
<dbReference type="GlyCosmos" id="B4HNS1">
    <property type="glycosylation" value="1 site, No reported glycans"/>
</dbReference>
<dbReference type="EnsemblMetazoa" id="FBtr0204284">
    <property type="protein sequence ID" value="FBpp0202776"/>
    <property type="gene ID" value="FBgn0176180"/>
</dbReference>
<dbReference type="EnsemblMetazoa" id="XM_002033387.2">
    <property type="protein sequence ID" value="XP_002033423.1"/>
    <property type="gene ID" value="LOC6608699"/>
</dbReference>
<dbReference type="GeneID" id="6608699"/>
<dbReference type="KEGG" id="dse:6608699"/>
<dbReference type="HOGENOM" id="CLU_001265_30_5_1"/>
<dbReference type="OMA" id="AISMIYV"/>
<dbReference type="OrthoDB" id="40450at7215"/>
<dbReference type="PhylomeDB" id="B4HNS1"/>
<dbReference type="Proteomes" id="UP000001292">
    <property type="component" value="Unassembled WGS sequence"/>
</dbReference>
<dbReference type="GO" id="GO:0005886">
    <property type="term" value="C:plasma membrane"/>
    <property type="evidence" value="ECO:0000250"/>
    <property type="project" value="UniProtKB"/>
</dbReference>
<dbReference type="GO" id="GO:0051119">
    <property type="term" value="F:sugar transmembrane transporter activity"/>
    <property type="evidence" value="ECO:0007669"/>
    <property type="project" value="InterPro"/>
</dbReference>
<dbReference type="CDD" id="cd17358">
    <property type="entry name" value="MFS_GLUT6_8_Class3_like"/>
    <property type="match status" value="1"/>
</dbReference>
<dbReference type="FunFam" id="1.20.1250.20:FF:000055">
    <property type="entry name" value="Facilitated trehalose transporter Tret1-2 homolog"/>
    <property type="match status" value="1"/>
</dbReference>
<dbReference type="Gene3D" id="1.20.1250.20">
    <property type="entry name" value="MFS general substrate transporter like domains"/>
    <property type="match status" value="1"/>
</dbReference>
<dbReference type="InterPro" id="IPR020846">
    <property type="entry name" value="MFS_dom"/>
</dbReference>
<dbReference type="InterPro" id="IPR044775">
    <property type="entry name" value="MFS_ERD6/Tret1-like"/>
</dbReference>
<dbReference type="InterPro" id="IPR005828">
    <property type="entry name" value="MFS_sugar_transport-like"/>
</dbReference>
<dbReference type="InterPro" id="IPR036259">
    <property type="entry name" value="MFS_trans_sf"/>
</dbReference>
<dbReference type="InterPro" id="IPR050549">
    <property type="entry name" value="MFS_Trehalose_Transporter"/>
</dbReference>
<dbReference type="InterPro" id="IPR003663">
    <property type="entry name" value="Sugar/inositol_transpt"/>
</dbReference>
<dbReference type="InterPro" id="IPR005829">
    <property type="entry name" value="Sugar_transporter_CS"/>
</dbReference>
<dbReference type="NCBIfam" id="TIGR00879">
    <property type="entry name" value="SP"/>
    <property type="match status" value="1"/>
</dbReference>
<dbReference type="PANTHER" id="PTHR48021">
    <property type="match status" value="1"/>
</dbReference>
<dbReference type="PANTHER" id="PTHR48021:SF96">
    <property type="entry name" value="FACILITATED TREHALOSE TRANSPORTER TRET1-1-RELATED"/>
    <property type="match status" value="1"/>
</dbReference>
<dbReference type="Pfam" id="PF00083">
    <property type="entry name" value="Sugar_tr"/>
    <property type="match status" value="1"/>
</dbReference>
<dbReference type="PRINTS" id="PR00171">
    <property type="entry name" value="SUGRTRNSPORT"/>
</dbReference>
<dbReference type="SUPFAM" id="SSF103473">
    <property type="entry name" value="MFS general substrate transporter"/>
    <property type="match status" value="1"/>
</dbReference>
<dbReference type="PROSITE" id="PS50850">
    <property type="entry name" value="MFS"/>
    <property type="match status" value="1"/>
</dbReference>
<dbReference type="PROSITE" id="PS00216">
    <property type="entry name" value="SUGAR_TRANSPORT_1"/>
    <property type="match status" value="2"/>
</dbReference>
<dbReference type="PROSITE" id="PS00217">
    <property type="entry name" value="SUGAR_TRANSPORT_2"/>
    <property type="match status" value="1"/>
</dbReference>
<evidence type="ECO:0000250" key="1">
    <source>
        <dbReference type="UniProtKB" id="A1Z8N1"/>
    </source>
</evidence>
<evidence type="ECO:0000250" key="2">
    <source>
        <dbReference type="UniProtKB" id="Q8MKK4"/>
    </source>
</evidence>
<evidence type="ECO:0000255" key="3"/>
<evidence type="ECO:0000312" key="4">
    <source>
        <dbReference type="EMBL" id="EDW47436.1"/>
    </source>
</evidence>
<sequence length="488" mass="53115">MKILMRADTHVSYSVPAEGTKANFTFSQVLAALSVSLCSLVVGFVSAYTSPALVSMTDRTITSFEVTKDAGSWVGGIMPLAALAGGITGGPLIEYLGRRNTILATAVPFIVSSLLIACAVNVIMILCGRFLTGFCVGIASLSLPVYLGETLQPEVRGTLGLLPTALGNIGILVCYVAGSFMNWSILAFLGAALPVPFLILMIIIPETPRWFVNRGQEERARKALKWLRGKEADVEPELKDLMQSQAEADSQATRNTCLELFKRINLKPLSISLGLMFFQQFSGINAVIFYTVQIFKDAGSTIDSNLCTIIVGIVNFFATFMGIILIDRLGRKILLYVSDIAMILTLSILGGFFYCKAHGPDVSHLGWLPLSCFVIYILGFSLGFGPIPWLMMGEILPAKIRGPAASVVTAFNWFCTFVVTKTFQDLTVAMGPHGAFWLFGVVCIVGLFFVIIYVPETRGKSLEEIERKMMGRVPISAVVNIKPFSFNM</sequence>
<comment type="function">
    <text evidence="2">Fails to transport trehalose.</text>
</comment>
<comment type="subcellular location">
    <subcellularLocation>
        <location evidence="2 3">Cell membrane</location>
        <topology evidence="2 3">Multi-pass membrane protein</topology>
    </subcellularLocation>
</comment>
<comment type="similarity">
    <text evidence="1 3">Belongs to the major facilitator superfamily. Sugar transporter (TC 2.A.1.1) family. Trehalose transporter subfamily.</text>
</comment>
<proteinExistence type="inferred from homology"/>
<organism>
    <name type="scientific">Drosophila sechellia</name>
    <name type="common">Fruit fly</name>
    <dbReference type="NCBI Taxonomy" id="7238"/>
    <lineage>
        <taxon>Eukaryota</taxon>
        <taxon>Metazoa</taxon>
        <taxon>Ecdysozoa</taxon>
        <taxon>Arthropoda</taxon>
        <taxon>Hexapoda</taxon>
        <taxon>Insecta</taxon>
        <taxon>Pterygota</taxon>
        <taxon>Neoptera</taxon>
        <taxon>Endopterygota</taxon>
        <taxon>Diptera</taxon>
        <taxon>Brachycera</taxon>
        <taxon>Muscomorpha</taxon>
        <taxon>Ephydroidea</taxon>
        <taxon>Drosophilidae</taxon>
        <taxon>Drosophila</taxon>
        <taxon>Sophophora</taxon>
    </lineage>
</organism>